<reference key="1">
    <citation type="journal article" date="2001" name="Proc. Natl. Acad. Sci. U.S.A.">
        <title>Complete genome sequence of Caulobacter crescentus.</title>
        <authorList>
            <person name="Nierman W.C."/>
            <person name="Feldblyum T.V."/>
            <person name="Laub M.T."/>
            <person name="Paulsen I.T."/>
            <person name="Nelson K.E."/>
            <person name="Eisen J.A."/>
            <person name="Heidelberg J.F."/>
            <person name="Alley M.R.K."/>
            <person name="Ohta N."/>
            <person name="Maddock J.R."/>
            <person name="Potocka I."/>
            <person name="Nelson W.C."/>
            <person name="Newton A."/>
            <person name="Stephens C."/>
            <person name="Phadke N.D."/>
            <person name="Ely B."/>
            <person name="DeBoy R.T."/>
            <person name="Dodson R.J."/>
            <person name="Durkin A.S."/>
            <person name="Gwinn M.L."/>
            <person name="Haft D.H."/>
            <person name="Kolonay J.F."/>
            <person name="Smit J."/>
            <person name="Craven M.B."/>
            <person name="Khouri H.M."/>
            <person name="Shetty J."/>
            <person name="Berry K.J."/>
            <person name="Utterback T.R."/>
            <person name="Tran K."/>
            <person name="Wolf A.M."/>
            <person name="Vamathevan J.J."/>
            <person name="Ermolaeva M.D."/>
            <person name="White O."/>
            <person name="Salzberg S.L."/>
            <person name="Venter J.C."/>
            <person name="Shapiro L."/>
            <person name="Fraser C.M."/>
        </authorList>
    </citation>
    <scope>NUCLEOTIDE SEQUENCE [LARGE SCALE GENOMIC DNA]</scope>
    <source>
        <strain>ATCC 19089 / CIP 103742 / CB 15</strain>
    </source>
</reference>
<protein>
    <recommendedName>
        <fullName evidence="1">Exodeoxyribonuclease 7 small subunit</fullName>
        <ecNumber evidence="1">3.1.11.6</ecNumber>
    </recommendedName>
    <alternativeName>
        <fullName evidence="1">Exodeoxyribonuclease VII small subunit</fullName>
        <shortName evidence="1">Exonuclease VII small subunit</shortName>
    </alternativeName>
</protein>
<feature type="chain" id="PRO_0000206933" description="Exodeoxyribonuclease 7 small subunit">
    <location>
        <begin position="1"/>
        <end position="84"/>
    </location>
</feature>
<sequence>MTDAANPPADISALSFEEALSQLERIVQELESGQAALERSIDIYERGAALKAHCEKKLEAARLKVEKIVLGQGGAVAAEPAEFN</sequence>
<gene>
    <name evidence="1" type="primary">xseB</name>
    <name type="ordered locus">CC_2070</name>
</gene>
<comment type="function">
    <text evidence="1">Bidirectionally degrades single-stranded DNA into large acid-insoluble oligonucleotides, which are then degraded further into small acid-soluble oligonucleotides.</text>
</comment>
<comment type="catalytic activity">
    <reaction evidence="1">
        <text>Exonucleolytic cleavage in either 5'- to 3'- or 3'- to 5'-direction to yield nucleoside 5'-phosphates.</text>
        <dbReference type="EC" id="3.1.11.6"/>
    </reaction>
</comment>
<comment type="subunit">
    <text evidence="1">Heterooligomer composed of large and small subunits.</text>
</comment>
<comment type="subcellular location">
    <subcellularLocation>
        <location evidence="1">Cytoplasm</location>
    </subcellularLocation>
</comment>
<comment type="similarity">
    <text evidence="1">Belongs to the XseB family.</text>
</comment>
<evidence type="ECO:0000255" key="1">
    <source>
        <dbReference type="HAMAP-Rule" id="MF_00337"/>
    </source>
</evidence>
<dbReference type="EC" id="3.1.11.6" evidence="1"/>
<dbReference type="EMBL" id="AE005673">
    <property type="protein sequence ID" value="AAK24041.1"/>
    <property type="molecule type" value="Genomic_DNA"/>
</dbReference>
<dbReference type="PIR" id="E87505">
    <property type="entry name" value="E87505"/>
</dbReference>
<dbReference type="RefSeq" id="NP_420873.1">
    <property type="nucleotide sequence ID" value="NC_002696.2"/>
</dbReference>
<dbReference type="RefSeq" id="WP_010919931.1">
    <property type="nucleotide sequence ID" value="NC_002696.2"/>
</dbReference>
<dbReference type="SMR" id="Q9A6M3"/>
<dbReference type="STRING" id="190650.CC_2070"/>
<dbReference type="DNASU" id="942995"/>
<dbReference type="EnsemblBacteria" id="AAK24041">
    <property type="protein sequence ID" value="AAK24041"/>
    <property type="gene ID" value="CC_2070"/>
</dbReference>
<dbReference type="KEGG" id="ccr:CC_2070"/>
<dbReference type="PATRIC" id="fig|190650.5.peg.2089"/>
<dbReference type="eggNOG" id="COG1722">
    <property type="taxonomic scope" value="Bacteria"/>
</dbReference>
<dbReference type="HOGENOM" id="CLU_145918_0_3_5"/>
<dbReference type="BioCyc" id="CAULO:CC2070-MONOMER"/>
<dbReference type="Proteomes" id="UP000001816">
    <property type="component" value="Chromosome"/>
</dbReference>
<dbReference type="GO" id="GO:0005829">
    <property type="term" value="C:cytosol"/>
    <property type="evidence" value="ECO:0007669"/>
    <property type="project" value="TreeGrafter"/>
</dbReference>
<dbReference type="GO" id="GO:0009318">
    <property type="term" value="C:exodeoxyribonuclease VII complex"/>
    <property type="evidence" value="ECO:0007669"/>
    <property type="project" value="InterPro"/>
</dbReference>
<dbReference type="GO" id="GO:0008855">
    <property type="term" value="F:exodeoxyribonuclease VII activity"/>
    <property type="evidence" value="ECO:0007669"/>
    <property type="project" value="UniProtKB-UniRule"/>
</dbReference>
<dbReference type="GO" id="GO:0006308">
    <property type="term" value="P:DNA catabolic process"/>
    <property type="evidence" value="ECO:0007669"/>
    <property type="project" value="UniProtKB-UniRule"/>
</dbReference>
<dbReference type="Gene3D" id="1.10.287.1040">
    <property type="entry name" value="Exonuclease VII, small subunit"/>
    <property type="match status" value="1"/>
</dbReference>
<dbReference type="HAMAP" id="MF_00337">
    <property type="entry name" value="Exonuc_7_S"/>
    <property type="match status" value="1"/>
</dbReference>
<dbReference type="InterPro" id="IPR003761">
    <property type="entry name" value="Exonuc_VII_S"/>
</dbReference>
<dbReference type="InterPro" id="IPR037004">
    <property type="entry name" value="Exonuc_VII_ssu_sf"/>
</dbReference>
<dbReference type="NCBIfam" id="NF002139">
    <property type="entry name" value="PRK00977.1-3"/>
    <property type="match status" value="1"/>
</dbReference>
<dbReference type="NCBIfam" id="TIGR01280">
    <property type="entry name" value="xseB"/>
    <property type="match status" value="1"/>
</dbReference>
<dbReference type="PANTHER" id="PTHR34137">
    <property type="entry name" value="EXODEOXYRIBONUCLEASE 7 SMALL SUBUNIT"/>
    <property type="match status" value="1"/>
</dbReference>
<dbReference type="PANTHER" id="PTHR34137:SF1">
    <property type="entry name" value="EXODEOXYRIBONUCLEASE 7 SMALL SUBUNIT"/>
    <property type="match status" value="1"/>
</dbReference>
<dbReference type="Pfam" id="PF02609">
    <property type="entry name" value="Exonuc_VII_S"/>
    <property type="match status" value="1"/>
</dbReference>
<dbReference type="SUPFAM" id="SSF116842">
    <property type="entry name" value="XseB-like"/>
    <property type="match status" value="1"/>
</dbReference>
<name>EX7S_CAUVC</name>
<organism>
    <name type="scientific">Caulobacter vibrioides (strain ATCC 19089 / CIP 103742 / CB 15)</name>
    <name type="common">Caulobacter crescentus</name>
    <dbReference type="NCBI Taxonomy" id="190650"/>
    <lineage>
        <taxon>Bacteria</taxon>
        <taxon>Pseudomonadati</taxon>
        <taxon>Pseudomonadota</taxon>
        <taxon>Alphaproteobacteria</taxon>
        <taxon>Caulobacterales</taxon>
        <taxon>Caulobacteraceae</taxon>
        <taxon>Caulobacter</taxon>
    </lineage>
</organism>
<proteinExistence type="inferred from homology"/>
<keyword id="KW-0963">Cytoplasm</keyword>
<keyword id="KW-0269">Exonuclease</keyword>
<keyword id="KW-0378">Hydrolase</keyword>
<keyword id="KW-0540">Nuclease</keyword>
<keyword id="KW-1185">Reference proteome</keyword>
<accession>Q9A6M3</accession>